<evidence type="ECO:0000255" key="1">
    <source>
        <dbReference type="HAMAP-Rule" id="MF_00651"/>
    </source>
</evidence>
<feature type="chain" id="PRO_0000172116" description="Putative pre-16S rRNA nuclease">
    <location>
        <begin position="1"/>
        <end position="161"/>
    </location>
</feature>
<protein>
    <recommendedName>
        <fullName evidence="1">Putative pre-16S rRNA nuclease</fullName>
        <ecNumber evidence="1">3.1.-.-</ecNumber>
    </recommendedName>
</protein>
<accession>Q7V847</accession>
<keyword id="KW-0963">Cytoplasm</keyword>
<keyword id="KW-0378">Hydrolase</keyword>
<keyword id="KW-0540">Nuclease</keyword>
<keyword id="KW-1185">Reference proteome</keyword>
<keyword id="KW-0690">Ribosome biogenesis</keyword>
<organism>
    <name type="scientific">Prochlorococcus marinus (strain MIT 9313)</name>
    <dbReference type="NCBI Taxonomy" id="74547"/>
    <lineage>
        <taxon>Bacteria</taxon>
        <taxon>Bacillati</taxon>
        <taxon>Cyanobacteriota</taxon>
        <taxon>Cyanophyceae</taxon>
        <taxon>Synechococcales</taxon>
        <taxon>Prochlorococcaceae</taxon>
        <taxon>Prochlorococcus</taxon>
    </lineage>
</organism>
<name>YQGF_PROMM</name>
<proteinExistence type="inferred from homology"/>
<gene>
    <name type="ordered locus">PMT_0526</name>
</gene>
<comment type="function">
    <text evidence="1">Could be a nuclease involved in processing of the 5'-end of pre-16S rRNA.</text>
</comment>
<comment type="subcellular location">
    <subcellularLocation>
        <location evidence="1">Cytoplasm</location>
    </subcellularLocation>
</comment>
<comment type="similarity">
    <text evidence="1">Belongs to the YqgF nuclease family.</text>
</comment>
<sequence length="161" mass="17562">MTATKPSPKSMLSLDLGKRRIGLAGCDPLGITVSPLPPLQRKSFERDLKVLQWHCTSRKVEGLVVGLPLDAKGLPTDQARHYERYGQRLARALKLPLALVNEHSSSWAAAERYNLQGDRSGQLDSAAAALLLEQWLREGPELKPVHVAAHPVSQVNSDSGS</sequence>
<dbReference type="EC" id="3.1.-.-" evidence="1"/>
<dbReference type="EMBL" id="BX548175">
    <property type="protein sequence ID" value="CAE20701.1"/>
    <property type="molecule type" value="Genomic_DNA"/>
</dbReference>
<dbReference type="SMR" id="Q7V847"/>
<dbReference type="KEGG" id="pmt:PMT_0526"/>
<dbReference type="eggNOG" id="COG0816">
    <property type="taxonomic scope" value="Bacteria"/>
</dbReference>
<dbReference type="HOGENOM" id="CLU_098240_3_1_3"/>
<dbReference type="OrthoDB" id="9796140at2"/>
<dbReference type="Proteomes" id="UP000001423">
    <property type="component" value="Chromosome"/>
</dbReference>
<dbReference type="GO" id="GO:0005829">
    <property type="term" value="C:cytosol"/>
    <property type="evidence" value="ECO:0007669"/>
    <property type="project" value="TreeGrafter"/>
</dbReference>
<dbReference type="GO" id="GO:0004518">
    <property type="term" value="F:nuclease activity"/>
    <property type="evidence" value="ECO:0007669"/>
    <property type="project" value="UniProtKB-KW"/>
</dbReference>
<dbReference type="GO" id="GO:0000967">
    <property type="term" value="P:rRNA 5'-end processing"/>
    <property type="evidence" value="ECO:0007669"/>
    <property type="project" value="UniProtKB-UniRule"/>
</dbReference>
<dbReference type="CDD" id="cd16964">
    <property type="entry name" value="YqgF"/>
    <property type="match status" value="1"/>
</dbReference>
<dbReference type="Gene3D" id="3.30.420.140">
    <property type="entry name" value="YqgF/RNase H-like domain"/>
    <property type="match status" value="1"/>
</dbReference>
<dbReference type="HAMAP" id="MF_00651">
    <property type="entry name" value="Nuclease_YqgF"/>
    <property type="match status" value="1"/>
</dbReference>
<dbReference type="InterPro" id="IPR012337">
    <property type="entry name" value="RNaseH-like_sf"/>
</dbReference>
<dbReference type="InterPro" id="IPR005227">
    <property type="entry name" value="YqgF"/>
</dbReference>
<dbReference type="InterPro" id="IPR006641">
    <property type="entry name" value="YqgF/RNaseH-like_dom"/>
</dbReference>
<dbReference type="InterPro" id="IPR037027">
    <property type="entry name" value="YqgF/RNaseH-like_dom_sf"/>
</dbReference>
<dbReference type="NCBIfam" id="TIGR00250">
    <property type="entry name" value="RNAse_H_YqgF"/>
    <property type="match status" value="1"/>
</dbReference>
<dbReference type="PANTHER" id="PTHR33317">
    <property type="entry name" value="POLYNUCLEOTIDYL TRANSFERASE, RIBONUCLEASE H-LIKE SUPERFAMILY PROTEIN"/>
    <property type="match status" value="1"/>
</dbReference>
<dbReference type="PANTHER" id="PTHR33317:SF4">
    <property type="entry name" value="POLYNUCLEOTIDYL TRANSFERASE, RIBONUCLEASE H-LIKE SUPERFAMILY PROTEIN"/>
    <property type="match status" value="1"/>
</dbReference>
<dbReference type="Pfam" id="PF03652">
    <property type="entry name" value="RuvX"/>
    <property type="match status" value="1"/>
</dbReference>
<dbReference type="SMART" id="SM00732">
    <property type="entry name" value="YqgFc"/>
    <property type="match status" value="1"/>
</dbReference>
<dbReference type="SUPFAM" id="SSF53098">
    <property type="entry name" value="Ribonuclease H-like"/>
    <property type="match status" value="1"/>
</dbReference>
<reference key="1">
    <citation type="journal article" date="2003" name="Nature">
        <title>Genome divergence in two Prochlorococcus ecotypes reflects oceanic niche differentiation.</title>
        <authorList>
            <person name="Rocap G."/>
            <person name="Larimer F.W."/>
            <person name="Lamerdin J.E."/>
            <person name="Malfatti S."/>
            <person name="Chain P."/>
            <person name="Ahlgren N.A."/>
            <person name="Arellano A."/>
            <person name="Coleman M."/>
            <person name="Hauser L."/>
            <person name="Hess W.R."/>
            <person name="Johnson Z.I."/>
            <person name="Land M.L."/>
            <person name="Lindell D."/>
            <person name="Post A.F."/>
            <person name="Regala W."/>
            <person name="Shah M."/>
            <person name="Shaw S.L."/>
            <person name="Steglich C."/>
            <person name="Sullivan M.B."/>
            <person name="Ting C.S."/>
            <person name="Tolonen A."/>
            <person name="Webb E.A."/>
            <person name="Zinser E.R."/>
            <person name="Chisholm S.W."/>
        </authorList>
    </citation>
    <scope>NUCLEOTIDE SEQUENCE [LARGE SCALE GENOMIC DNA]</scope>
    <source>
        <strain>MIT 9313</strain>
    </source>
</reference>